<sequence length="83" mass="9004">SPPVCGNKILEQGEDCDCGSPANCQDRCCNAATCKLTPGSQCNYGECCDQCRFKKAGTVCRIARGDWNDDYCTGKSSDCPWNH</sequence>
<organism>
    <name type="scientific">Bitis arietans</name>
    <name type="common">African puff adder</name>
    <dbReference type="NCBI Taxonomy" id="8692"/>
    <lineage>
        <taxon>Eukaryota</taxon>
        <taxon>Metazoa</taxon>
        <taxon>Chordata</taxon>
        <taxon>Craniata</taxon>
        <taxon>Vertebrata</taxon>
        <taxon>Euteleostomi</taxon>
        <taxon>Lepidosauria</taxon>
        <taxon>Squamata</taxon>
        <taxon>Bifurcata</taxon>
        <taxon>Unidentata</taxon>
        <taxon>Episquamata</taxon>
        <taxon>Toxicofera</taxon>
        <taxon>Serpentes</taxon>
        <taxon>Colubroidea</taxon>
        <taxon>Viperidae</taxon>
        <taxon>Viperinae</taxon>
        <taxon>Bitis</taxon>
    </lineage>
</organism>
<keyword id="KW-0002">3D-structure</keyword>
<keyword id="KW-1217">Cell adhesion impairing toxin</keyword>
<keyword id="KW-0903">Direct protein sequencing</keyword>
<keyword id="KW-1015">Disulfide bond</keyword>
<keyword id="KW-1199">Hemostasis impairing toxin</keyword>
<keyword id="KW-1201">Platelet aggregation inhibiting toxin</keyword>
<keyword id="KW-0964">Secreted</keyword>
<keyword id="KW-0800">Toxin</keyword>
<proteinExistence type="evidence at protein level"/>
<comment type="function">
    <text evidence="4">Inhibits fibrinogen interaction with platelets. Acts by binding to alpha-IIb/beta-3 (ITGA2B/ITGB3) on the platelet surface and inhibits aggregation induced by ADP, thrombin, platelet-activating factor and collagen.</text>
</comment>
<comment type="subunit">
    <text evidence="4">Monomer.</text>
</comment>
<comment type="subcellular location">
    <subcellularLocation>
        <location evidence="4">Secreted</location>
    </subcellularLocation>
</comment>
<comment type="tissue specificity">
    <text evidence="15">Expressed by the venom gland.</text>
</comment>
<comment type="PTM">
    <text evidence="3">Exists in 3 forms in the venom. The forms A, B, and C are present at 53%, 32% and 15%. The forms A and B differ by their disulfide bond pattern in the N-terminal part. No information is known about form C.</text>
</comment>
<comment type="miscellaneous">
    <text>The disintegrin belongs to the long disintegrin subfamily.</text>
</comment>
<comment type="similarity">
    <text evidence="14">Belongs to the venom metalloproteinase (M12B) family. P-II subfamily. P-IIa sub-subfamily.</text>
</comment>
<name>VM2_BITAR</name>
<reference key="1">
    <citation type="journal article" date="1989" name="J. Biol. Chem.">
        <title>Characterization and platelet inhibitory activity of bitistatin, a potent arginine-glycine-aspartic acid-containing peptide from the venom of the viper Bitis arietans.</title>
        <authorList>
            <person name="Shebuski R.J."/>
            <person name="Ramjit D.R."/>
            <person name="Bencen G.H."/>
            <person name="Polokoff M.A."/>
        </authorList>
    </citation>
    <scope>PROTEIN SEQUENCE</scope>
    <scope>FUNCTION</scope>
    <scope>SUBUNIT</scope>
    <scope>SUBCELLULAR LOCATION</scope>
    <source>
        <tissue>Venom</tissue>
    </source>
</reference>
<reference key="2">
    <citation type="journal article" date="1990" name="Proc. Natl. Acad. Sci. U.S.A.">
        <title>Platelet glycoprotein IIb-IIIa protein antagonists from snake venoms: evidence for a family of platelet-aggregation inhibitors.</title>
        <authorList>
            <person name="Dennis M.S."/>
            <person name="Henzel W.J."/>
            <person name="Pitti R.M."/>
            <person name="Lipari M.T."/>
            <person name="Napier M.A."/>
            <person name="Deisher T.A."/>
            <person name="Bunting S."/>
            <person name="Lazarus R.A."/>
        </authorList>
    </citation>
    <scope>PROTEIN SEQUENCE</scope>
    <source>
        <tissue>Venom</tissue>
    </source>
</reference>
<reference key="3">
    <citation type="journal article" date="2006" name="J. Mol. Evol.">
        <title>Molecular cloning of disintegrin-like transcript BA-5A from a Bitis arietans venom gland cDNA library: a putative intermediate in the evolution of the long-chain disintegrin bitistatin.</title>
        <authorList>
            <person name="Juarez P."/>
            <person name="Wagstaff S.C."/>
            <person name="Oliver J."/>
            <person name="Sanz L."/>
            <person name="Harrison R.A."/>
            <person name="Calvete J.J."/>
        </authorList>
    </citation>
    <scope>NUCLEOTIDE SEQUENCE [MRNA]</scope>
    <source>
        <tissue>Venom gland</tissue>
    </source>
</reference>
<reference key="4">
    <citation type="journal article" date="1982" name="Hoppe-Seyler's Z. Physiol. Chem.">
        <title>Snake venom: protein CM-2 from Bitis arietans (puff adder) venom.</title>
        <authorList>
            <person name="Joubert F.J."/>
            <person name="Haylett T."/>
            <person name="Strydom D.J."/>
            <person name="Taljaard N."/>
        </authorList>
    </citation>
    <scope>PRELIMINARY PROTEIN SEQUENCE</scope>
    <source>
        <tissue>Venom</tissue>
    </source>
</reference>
<reference key="5">
    <citation type="journal article" date="1991" name="Biochim. Biophys. Acta">
        <title>Purification and characterization of an antiplatelet peptide, arietin, from Bitis arietans venom.</title>
        <authorList>
            <person name="Huang T.-F."/>
            <person name="Wang W.J."/>
            <person name="Teng C.-M."/>
            <person name="Liu C.-S."/>
            <person name="Ouyang C."/>
        </authorList>
    </citation>
    <scope>PROTEIN SEQUENCE OF 1-17 AND 56-70</scope>
    <source>
        <tissue>Venom</tissue>
    </source>
</reference>
<reference key="6">
    <citation type="journal article" date="1991" name="Biochim. Biophys. Acta">
        <title>Mechanism of action of the antiplatelet peptide, arietin, from Bitis arietans venom.</title>
        <authorList>
            <person name="Huang T.-F."/>
            <person name="Wang W.J."/>
            <person name="Teng C.-M."/>
            <person name="Ouyang C."/>
        </authorList>
    </citation>
    <scope>MECHANISM OF ACTION</scope>
</reference>
<reference key="7">
    <citation type="journal article" date="1997" name="FEBS Lett.">
        <title>The disulphide bond pattern of bitistatin, a disintegrin isolated from the venom of the viper Bitis arietans.</title>
        <authorList>
            <person name="Calvete J.J."/>
            <person name="Schrader M."/>
            <person name="Raida M."/>
            <person name="McLane M.A."/>
            <person name="Romero A."/>
            <person name="Niewiarowski S."/>
        </authorList>
    </citation>
    <scope>DISULFIDE BONDS OF FORM A</scope>
</reference>
<reference key="8">
    <citation type="journal article" date="2015" name="FEBS J.">
        <title>NMR structure of bitistatin - a missing piece in the evolutionary pathway of snake venom disintegrins.</title>
        <authorList>
            <person name="Carbajo R.J."/>
            <person name="Sanz L."/>
            <person name="Perez A."/>
            <person name="Calvete J.J."/>
        </authorList>
    </citation>
    <scope>STRUCTURE BY NMR OF FORMS A AND B</scope>
    <scope>DISULFIDE BOND OF FORM A</scope>
    <scope>DISULFIDE BOND OF FORM B</scope>
</reference>
<evidence type="ECO:0000255" key="1">
    <source>
        <dbReference type="PROSITE-ProRule" id="PRU00068"/>
    </source>
</evidence>
<evidence type="ECO:0000269" key="2">
    <source>
    </source>
</evidence>
<evidence type="ECO:0000269" key="3">
    <source>
    </source>
</evidence>
<evidence type="ECO:0000269" key="4">
    <source>
    </source>
</evidence>
<evidence type="ECO:0000269" key="5">
    <source>
    </source>
</evidence>
<evidence type="ECO:0000303" key="6">
    <source>
    </source>
</evidence>
<evidence type="ECO:0000303" key="7">
    <source>
    </source>
</evidence>
<evidence type="ECO:0000303" key="8">
    <source>
    </source>
</evidence>
<evidence type="ECO:0000303" key="9">
    <source>
    </source>
</evidence>
<evidence type="ECO:0000303" key="10">
    <source>
    </source>
</evidence>
<evidence type="ECO:0000303" key="11">
    <source>
    </source>
</evidence>
<evidence type="ECO:0000303" key="12">
    <source>
    </source>
</evidence>
<evidence type="ECO:0000303" key="13">
    <source>
    </source>
</evidence>
<evidence type="ECO:0000305" key="14"/>
<evidence type="ECO:0000305" key="15">
    <source>
    </source>
</evidence>
<evidence type="ECO:0000312" key="16">
    <source>
        <dbReference type="PDB" id="2MOP"/>
    </source>
</evidence>
<evidence type="ECO:0000312" key="17">
    <source>
        <dbReference type="PDB" id="2MP5"/>
    </source>
</evidence>
<evidence type="ECO:0007829" key="18">
    <source>
        <dbReference type="PDB" id="2MOP"/>
    </source>
</evidence>
<accession>P17497</accession>
<accession>Q4JCS2</accession>
<dbReference type="EMBL" id="AY924402">
    <property type="protein sequence ID" value="AAY43681.1"/>
    <property type="molecule type" value="mRNA"/>
</dbReference>
<dbReference type="PIR" id="A34156">
    <property type="entry name" value="A34156"/>
</dbReference>
<dbReference type="PIR" id="F35982">
    <property type="entry name" value="F35982"/>
</dbReference>
<dbReference type="PIR" id="S15982">
    <property type="entry name" value="S15982"/>
</dbReference>
<dbReference type="PDB" id="2MOP">
    <property type="method" value="NMR"/>
    <property type="chains" value="1=1-83"/>
</dbReference>
<dbReference type="PDB" id="2MP5">
    <property type="method" value="NMR"/>
    <property type="chains" value="1=1-83"/>
</dbReference>
<dbReference type="PDBsum" id="2MOP"/>
<dbReference type="PDBsum" id="2MP5"/>
<dbReference type="BMRB" id="P17497"/>
<dbReference type="SMR" id="P17497"/>
<dbReference type="EvolutionaryTrace" id="P17497"/>
<dbReference type="GO" id="GO:0005576">
    <property type="term" value="C:extracellular region"/>
    <property type="evidence" value="ECO:0007669"/>
    <property type="project" value="UniProtKB-SubCell"/>
</dbReference>
<dbReference type="GO" id="GO:0005886">
    <property type="term" value="C:plasma membrane"/>
    <property type="evidence" value="ECO:0007669"/>
    <property type="project" value="TreeGrafter"/>
</dbReference>
<dbReference type="GO" id="GO:0090729">
    <property type="term" value="F:toxin activity"/>
    <property type="evidence" value="ECO:0007669"/>
    <property type="project" value="UniProtKB-KW"/>
</dbReference>
<dbReference type="FunFam" id="4.10.70.10:FF:000001">
    <property type="entry name" value="Disintegrin and metalloproteinase domain-containing protein 22"/>
    <property type="match status" value="1"/>
</dbReference>
<dbReference type="Gene3D" id="4.10.70.10">
    <property type="entry name" value="Disintegrin domain"/>
    <property type="match status" value="1"/>
</dbReference>
<dbReference type="InterPro" id="IPR018358">
    <property type="entry name" value="Disintegrin_CS"/>
</dbReference>
<dbReference type="InterPro" id="IPR001762">
    <property type="entry name" value="Disintegrin_dom"/>
</dbReference>
<dbReference type="InterPro" id="IPR036436">
    <property type="entry name" value="Disintegrin_dom_sf"/>
</dbReference>
<dbReference type="PANTHER" id="PTHR11905">
    <property type="entry name" value="ADAM A DISINTEGRIN AND METALLOPROTEASE DOMAIN"/>
    <property type="match status" value="1"/>
</dbReference>
<dbReference type="PANTHER" id="PTHR11905:SF32">
    <property type="entry name" value="DISINTEGRIN AND METALLOPROTEINASE DOMAIN-CONTAINING PROTEIN 28"/>
    <property type="match status" value="1"/>
</dbReference>
<dbReference type="Pfam" id="PF00200">
    <property type="entry name" value="Disintegrin"/>
    <property type="match status" value="1"/>
</dbReference>
<dbReference type="PRINTS" id="PR00289">
    <property type="entry name" value="DISINTEGRIN"/>
</dbReference>
<dbReference type="SMART" id="SM00050">
    <property type="entry name" value="DISIN"/>
    <property type="match status" value="1"/>
</dbReference>
<dbReference type="SUPFAM" id="SSF57552">
    <property type="entry name" value="Blood coagulation inhibitor (disintegrin)"/>
    <property type="match status" value="1"/>
</dbReference>
<dbReference type="PROSITE" id="PS00427">
    <property type="entry name" value="DISINTEGRIN_1"/>
    <property type="match status" value="1"/>
</dbReference>
<dbReference type="PROSITE" id="PS50214">
    <property type="entry name" value="DISINTEGRIN_2"/>
    <property type="match status" value="1"/>
</dbReference>
<feature type="chain" id="PRO_0000101784" description="Disintegrin bitistatin" evidence="2 4">
    <location>
        <begin position="1"/>
        <end position="83"/>
    </location>
</feature>
<feature type="domain" description="Disintegrin" evidence="1">
    <location>
        <begin position="2"/>
        <end position="83"/>
    </location>
</feature>
<feature type="short sequence motif" description="Cell attachment site">
    <location>
        <begin position="64"/>
        <end position="66"/>
    </location>
</feature>
<feature type="disulfide bond" description="In form B" evidence="3 17">
    <location>
        <begin position="5"/>
        <end position="34"/>
    </location>
</feature>
<feature type="disulfide bond" description="In form A" evidence="3 5 17">
    <location>
        <begin position="5"/>
        <end position="24"/>
    </location>
</feature>
<feature type="disulfide bond" description="In form A" evidence="3 5 17">
    <location>
        <begin position="16"/>
        <end position="34"/>
    </location>
</feature>
<feature type="disulfide bond" description="In form B" evidence="3 17">
    <location>
        <begin position="16"/>
        <end position="29"/>
    </location>
</feature>
<feature type="disulfide bond" description="In form A" evidence="3 5 17">
    <location>
        <begin position="18"/>
        <end position="29"/>
    </location>
</feature>
<feature type="disulfide bond" description="In form B" evidence="3 17">
    <location>
        <begin position="18"/>
        <end position="24"/>
    </location>
</feature>
<feature type="disulfide bond" description="In forms A and B" evidence="3 5 16 17">
    <location>
        <begin position="28"/>
        <end position="51"/>
    </location>
</feature>
<feature type="disulfide bond" description="In form A and B" evidence="3 5 16 17">
    <location>
        <begin position="42"/>
        <end position="48"/>
    </location>
</feature>
<feature type="disulfide bond" description="In form A and B" evidence="3 5 16 17">
    <location>
        <begin position="47"/>
        <end position="72"/>
    </location>
</feature>
<feature type="disulfide bond" description="In form A and B" evidence="3 5 16 17">
    <location>
        <begin position="60"/>
        <end position="79"/>
    </location>
</feature>
<feature type="sequence conflict" description="In Ref. 5; AA sequence." evidence="14" ref="5">
    <original>G</original>
    <variation>L</variation>
    <location>
        <position position="57"/>
    </location>
</feature>
<feature type="sequence conflict" description="In Ref. 5; AA sequence." evidence="14" ref="5">
    <original>W</original>
    <variation>S</variation>
    <location>
        <position position="67"/>
    </location>
</feature>
<feature type="strand" evidence="18">
    <location>
        <begin position="13"/>
        <end position="16"/>
    </location>
</feature>
<feature type="turn" evidence="18">
    <location>
        <begin position="21"/>
        <end position="25"/>
    </location>
</feature>
<feature type="strand" evidence="18">
    <location>
        <begin position="26"/>
        <end position="30"/>
    </location>
</feature>
<feature type="turn" evidence="18">
    <location>
        <begin position="31"/>
        <end position="34"/>
    </location>
</feature>
<feature type="strand" evidence="18">
    <location>
        <begin position="43"/>
        <end position="45"/>
    </location>
</feature>
<feature type="strand" evidence="18">
    <location>
        <begin position="59"/>
        <end position="61"/>
    </location>
</feature>
<feature type="strand" evidence="18">
    <location>
        <begin position="63"/>
        <end position="68"/>
    </location>
</feature>
<feature type="strand" evidence="18">
    <location>
        <begin position="74"/>
        <end position="77"/>
    </location>
</feature>
<protein>
    <recommendedName>
        <fullName evidence="10 11 13">Disintegrin bitistatin</fullName>
    </recommendedName>
    <alternativeName>
        <fullName evidence="7 8">Arietin</fullName>
    </alternativeName>
    <alternativeName>
        <fullName evidence="9">Bitan-alpha</fullName>
    </alternativeName>
    <alternativeName>
        <fullName evidence="6">Bitistatin D1</fullName>
    </alternativeName>
    <alternativeName>
        <fullName>Platelet aggregation activation inhibitor</fullName>
    </alternativeName>
    <alternativeName>
        <fullName evidence="12">Venom protein CM-2</fullName>
    </alternativeName>
</protein>